<proteinExistence type="inferred from homology"/>
<feature type="chain" id="PRO_1000003477" description="Small ribosomal subunit protein bS18">
    <location>
        <begin position="1"/>
        <end position="82"/>
    </location>
</feature>
<sequence length="82" mass="9596">MNKPVHNNEHRRKRFNKKCPFVSAGWKTIDYKDTETLKKFITERGKILPRRITGVSSRFQGILTLAIKRARHIGFLPFVGED</sequence>
<name>RS18_CHLFF</name>
<protein>
    <recommendedName>
        <fullName evidence="1">Small ribosomal subunit protein bS18</fullName>
    </recommendedName>
    <alternativeName>
        <fullName evidence="2">30S ribosomal protein S18</fullName>
    </alternativeName>
</protein>
<comment type="function">
    <text evidence="1">Binds as a heterodimer with protein bS6 to the central domain of the 16S rRNA, where it helps stabilize the platform of the 30S subunit.</text>
</comment>
<comment type="subunit">
    <text evidence="1">Part of the 30S ribosomal subunit. Forms a tight heterodimer with protein bS6.</text>
</comment>
<comment type="similarity">
    <text evidence="1">Belongs to the bacterial ribosomal protein bS18 family.</text>
</comment>
<gene>
    <name evidence="1" type="primary">rpsR</name>
    <name type="ordered locus">CF0197</name>
</gene>
<organism>
    <name type="scientific">Chlamydia felis (strain Fe/C-56)</name>
    <name type="common">Chlamydophila felis</name>
    <dbReference type="NCBI Taxonomy" id="264202"/>
    <lineage>
        <taxon>Bacteria</taxon>
        <taxon>Pseudomonadati</taxon>
        <taxon>Chlamydiota</taxon>
        <taxon>Chlamydiia</taxon>
        <taxon>Chlamydiales</taxon>
        <taxon>Chlamydiaceae</taxon>
        <taxon>Chlamydia/Chlamydophila group</taxon>
        <taxon>Chlamydia</taxon>
    </lineage>
</organism>
<accession>Q255R9</accession>
<evidence type="ECO:0000255" key="1">
    <source>
        <dbReference type="HAMAP-Rule" id="MF_00270"/>
    </source>
</evidence>
<evidence type="ECO:0000305" key="2"/>
<dbReference type="EMBL" id="AP006861">
    <property type="protein sequence ID" value="BAE80969.1"/>
    <property type="molecule type" value="Genomic_DNA"/>
</dbReference>
<dbReference type="RefSeq" id="WP_006343478.1">
    <property type="nucleotide sequence ID" value="NC_007899.1"/>
</dbReference>
<dbReference type="SMR" id="Q255R9"/>
<dbReference type="STRING" id="264202.CF0197"/>
<dbReference type="GeneID" id="93024338"/>
<dbReference type="KEGG" id="cfe:CF0197"/>
<dbReference type="eggNOG" id="COG0238">
    <property type="taxonomic scope" value="Bacteria"/>
</dbReference>
<dbReference type="HOGENOM" id="CLU_148710_2_2_0"/>
<dbReference type="OrthoDB" id="9812008at2"/>
<dbReference type="Proteomes" id="UP000001260">
    <property type="component" value="Chromosome"/>
</dbReference>
<dbReference type="GO" id="GO:0022627">
    <property type="term" value="C:cytosolic small ribosomal subunit"/>
    <property type="evidence" value="ECO:0007669"/>
    <property type="project" value="TreeGrafter"/>
</dbReference>
<dbReference type="GO" id="GO:0070181">
    <property type="term" value="F:small ribosomal subunit rRNA binding"/>
    <property type="evidence" value="ECO:0007669"/>
    <property type="project" value="TreeGrafter"/>
</dbReference>
<dbReference type="GO" id="GO:0003735">
    <property type="term" value="F:structural constituent of ribosome"/>
    <property type="evidence" value="ECO:0007669"/>
    <property type="project" value="InterPro"/>
</dbReference>
<dbReference type="GO" id="GO:0006412">
    <property type="term" value="P:translation"/>
    <property type="evidence" value="ECO:0007669"/>
    <property type="project" value="UniProtKB-UniRule"/>
</dbReference>
<dbReference type="Gene3D" id="4.10.640.10">
    <property type="entry name" value="Ribosomal protein S18"/>
    <property type="match status" value="1"/>
</dbReference>
<dbReference type="HAMAP" id="MF_00270">
    <property type="entry name" value="Ribosomal_bS18"/>
    <property type="match status" value="1"/>
</dbReference>
<dbReference type="InterPro" id="IPR001648">
    <property type="entry name" value="Ribosomal_bS18"/>
</dbReference>
<dbReference type="InterPro" id="IPR018275">
    <property type="entry name" value="Ribosomal_bS18_CS"/>
</dbReference>
<dbReference type="InterPro" id="IPR036870">
    <property type="entry name" value="Ribosomal_bS18_sf"/>
</dbReference>
<dbReference type="NCBIfam" id="TIGR00165">
    <property type="entry name" value="S18"/>
    <property type="match status" value="1"/>
</dbReference>
<dbReference type="PANTHER" id="PTHR13479">
    <property type="entry name" value="30S RIBOSOMAL PROTEIN S18"/>
    <property type="match status" value="1"/>
</dbReference>
<dbReference type="PANTHER" id="PTHR13479:SF40">
    <property type="entry name" value="SMALL RIBOSOMAL SUBUNIT PROTEIN BS18M"/>
    <property type="match status" value="1"/>
</dbReference>
<dbReference type="Pfam" id="PF01084">
    <property type="entry name" value="Ribosomal_S18"/>
    <property type="match status" value="1"/>
</dbReference>
<dbReference type="PRINTS" id="PR00974">
    <property type="entry name" value="RIBOSOMALS18"/>
</dbReference>
<dbReference type="SUPFAM" id="SSF46911">
    <property type="entry name" value="Ribosomal protein S18"/>
    <property type="match status" value="1"/>
</dbReference>
<dbReference type="PROSITE" id="PS00057">
    <property type="entry name" value="RIBOSOMAL_S18"/>
    <property type="match status" value="1"/>
</dbReference>
<keyword id="KW-0687">Ribonucleoprotein</keyword>
<keyword id="KW-0689">Ribosomal protein</keyword>
<keyword id="KW-0694">RNA-binding</keyword>
<keyword id="KW-0699">rRNA-binding</keyword>
<reference key="1">
    <citation type="journal article" date="2006" name="DNA Res.">
        <title>Genome sequence of the cat pathogen, Chlamydophila felis.</title>
        <authorList>
            <person name="Azuma Y."/>
            <person name="Hirakawa H."/>
            <person name="Yamashita A."/>
            <person name="Cai Y."/>
            <person name="Rahman M.A."/>
            <person name="Suzuki H."/>
            <person name="Mitaku S."/>
            <person name="Toh H."/>
            <person name="Goto S."/>
            <person name="Murakami T."/>
            <person name="Sugi K."/>
            <person name="Hayashi H."/>
            <person name="Fukushi H."/>
            <person name="Hattori M."/>
            <person name="Kuhara S."/>
            <person name="Shirai M."/>
        </authorList>
    </citation>
    <scope>NUCLEOTIDE SEQUENCE [LARGE SCALE GENOMIC DNA]</scope>
    <source>
        <strain>Fe/C-56</strain>
    </source>
</reference>